<dbReference type="EC" id="3.4.21.88" evidence="1"/>
<dbReference type="EMBL" id="CP000697">
    <property type="protein sequence ID" value="ABQ32073.1"/>
    <property type="molecule type" value="Genomic_DNA"/>
</dbReference>
<dbReference type="RefSeq" id="WP_007424091.1">
    <property type="nucleotide sequence ID" value="NC_009484.1"/>
</dbReference>
<dbReference type="SMR" id="A5G2J1"/>
<dbReference type="STRING" id="349163.Acry_2883"/>
<dbReference type="MEROPS" id="S24.001"/>
<dbReference type="KEGG" id="acr:Acry_2883"/>
<dbReference type="eggNOG" id="COG1974">
    <property type="taxonomic scope" value="Bacteria"/>
</dbReference>
<dbReference type="HOGENOM" id="CLU_066192_45_2_5"/>
<dbReference type="Proteomes" id="UP000000245">
    <property type="component" value="Chromosome"/>
</dbReference>
<dbReference type="GO" id="GO:0003677">
    <property type="term" value="F:DNA binding"/>
    <property type="evidence" value="ECO:0007669"/>
    <property type="project" value="UniProtKB-UniRule"/>
</dbReference>
<dbReference type="GO" id="GO:0004252">
    <property type="term" value="F:serine-type endopeptidase activity"/>
    <property type="evidence" value="ECO:0007669"/>
    <property type="project" value="UniProtKB-UniRule"/>
</dbReference>
<dbReference type="GO" id="GO:0006281">
    <property type="term" value="P:DNA repair"/>
    <property type="evidence" value="ECO:0007669"/>
    <property type="project" value="UniProtKB-UniRule"/>
</dbReference>
<dbReference type="GO" id="GO:0006260">
    <property type="term" value="P:DNA replication"/>
    <property type="evidence" value="ECO:0007669"/>
    <property type="project" value="UniProtKB-UniRule"/>
</dbReference>
<dbReference type="GO" id="GO:0045892">
    <property type="term" value="P:negative regulation of DNA-templated transcription"/>
    <property type="evidence" value="ECO:0007669"/>
    <property type="project" value="UniProtKB-UniRule"/>
</dbReference>
<dbReference type="GO" id="GO:0006508">
    <property type="term" value="P:proteolysis"/>
    <property type="evidence" value="ECO:0007669"/>
    <property type="project" value="InterPro"/>
</dbReference>
<dbReference type="GO" id="GO:0009432">
    <property type="term" value="P:SOS response"/>
    <property type="evidence" value="ECO:0007669"/>
    <property type="project" value="UniProtKB-UniRule"/>
</dbReference>
<dbReference type="CDD" id="cd06529">
    <property type="entry name" value="S24_LexA-like"/>
    <property type="match status" value="1"/>
</dbReference>
<dbReference type="FunFam" id="2.10.109.10:FF:000001">
    <property type="entry name" value="LexA repressor"/>
    <property type="match status" value="1"/>
</dbReference>
<dbReference type="Gene3D" id="2.10.109.10">
    <property type="entry name" value="Umud Fragment, subunit A"/>
    <property type="match status" value="1"/>
</dbReference>
<dbReference type="Gene3D" id="1.10.10.10">
    <property type="entry name" value="Winged helix-like DNA-binding domain superfamily/Winged helix DNA-binding domain"/>
    <property type="match status" value="1"/>
</dbReference>
<dbReference type="HAMAP" id="MF_00015">
    <property type="entry name" value="LexA"/>
    <property type="match status" value="1"/>
</dbReference>
<dbReference type="InterPro" id="IPR006200">
    <property type="entry name" value="LexA"/>
</dbReference>
<dbReference type="InterPro" id="IPR039418">
    <property type="entry name" value="LexA-like"/>
</dbReference>
<dbReference type="InterPro" id="IPR036286">
    <property type="entry name" value="LexA/Signal_pep-like_sf"/>
</dbReference>
<dbReference type="InterPro" id="IPR006199">
    <property type="entry name" value="LexA_DNA-bd_dom"/>
</dbReference>
<dbReference type="InterPro" id="IPR050077">
    <property type="entry name" value="LexA_repressor"/>
</dbReference>
<dbReference type="InterPro" id="IPR006197">
    <property type="entry name" value="Peptidase_S24_LexA"/>
</dbReference>
<dbReference type="InterPro" id="IPR015927">
    <property type="entry name" value="Peptidase_S24_S26A/B/C"/>
</dbReference>
<dbReference type="InterPro" id="IPR036388">
    <property type="entry name" value="WH-like_DNA-bd_sf"/>
</dbReference>
<dbReference type="InterPro" id="IPR036390">
    <property type="entry name" value="WH_DNA-bd_sf"/>
</dbReference>
<dbReference type="NCBIfam" id="TIGR00498">
    <property type="entry name" value="lexA"/>
    <property type="match status" value="1"/>
</dbReference>
<dbReference type="PANTHER" id="PTHR33516">
    <property type="entry name" value="LEXA REPRESSOR"/>
    <property type="match status" value="1"/>
</dbReference>
<dbReference type="PANTHER" id="PTHR33516:SF2">
    <property type="entry name" value="LEXA REPRESSOR-RELATED"/>
    <property type="match status" value="1"/>
</dbReference>
<dbReference type="Pfam" id="PF01726">
    <property type="entry name" value="LexA_DNA_bind"/>
    <property type="match status" value="1"/>
</dbReference>
<dbReference type="Pfam" id="PF00717">
    <property type="entry name" value="Peptidase_S24"/>
    <property type="match status" value="1"/>
</dbReference>
<dbReference type="PRINTS" id="PR00726">
    <property type="entry name" value="LEXASERPTASE"/>
</dbReference>
<dbReference type="SUPFAM" id="SSF51306">
    <property type="entry name" value="LexA/Signal peptidase"/>
    <property type="match status" value="1"/>
</dbReference>
<dbReference type="SUPFAM" id="SSF46785">
    <property type="entry name" value="Winged helix' DNA-binding domain"/>
    <property type="match status" value="1"/>
</dbReference>
<reference key="1">
    <citation type="submission" date="2007-05" db="EMBL/GenBank/DDBJ databases">
        <title>Complete sequence of chromosome of Acidiphilium cryptum JF-5.</title>
        <authorList>
            <consortium name="US DOE Joint Genome Institute"/>
            <person name="Copeland A."/>
            <person name="Lucas S."/>
            <person name="Lapidus A."/>
            <person name="Barry K."/>
            <person name="Detter J.C."/>
            <person name="Glavina del Rio T."/>
            <person name="Hammon N."/>
            <person name="Israni S."/>
            <person name="Dalin E."/>
            <person name="Tice H."/>
            <person name="Pitluck S."/>
            <person name="Sims D."/>
            <person name="Brettin T."/>
            <person name="Bruce D."/>
            <person name="Han C."/>
            <person name="Schmutz J."/>
            <person name="Larimer F."/>
            <person name="Land M."/>
            <person name="Hauser L."/>
            <person name="Kyrpides N."/>
            <person name="Kim E."/>
            <person name="Magnuson T."/>
            <person name="Richardson P."/>
        </authorList>
    </citation>
    <scope>NUCLEOTIDE SEQUENCE [LARGE SCALE GENOMIC DNA]</scope>
    <source>
        <strain>JF-5</strain>
    </source>
</reference>
<proteinExistence type="inferred from homology"/>
<feature type="chain" id="PRO_1000001251" description="LexA repressor">
    <location>
        <begin position="1"/>
        <end position="231"/>
    </location>
</feature>
<feature type="DNA-binding region" description="H-T-H motif" evidence="1">
    <location>
        <begin position="26"/>
        <end position="46"/>
    </location>
</feature>
<feature type="active site" description="For autocatalytic cleavage activity" evidence="1">
    <location>
        <position position="152"/>
    </location>
</feature>
<feature type="active site" description="For autocatalytic cleavage activity" evidence="1">
    <location>
        <position position="190"/>
    </location>
</feature>
<feature type="site" description="Cleavage; by autolysis" evidence="1">
    <location>
        <begin position="117"/>
        <end position="118"/>
    </location>
</feature>
<evidence type="ECO:0000255" key="1">
    <source>
        <dbReference type="HAMAP-Rule" id="MF_00015"/>
    </source>
</evidence>
<sequence length="231" mass="25593">MLTRKQHELLVYIDQHLRRTGCSPSFEEMKEALDLKSKSGIHRLIGALEERGFLRRHKHRARALEVLRLPSDAAADRPDTGFAPNVIRGDFTARLQGARAADPAAAITLPLYGRIAAGQPIEALREHQAEIEIPASLVGPGEHYALEVAGDSMVDAGILDGDTAIIRRGETAETGQIVVALIDDVEVTLKRLRRRGNSTALEPANPRYEIRIFPAERVKVQGRLVALFRRY</sequence>
<accession>A5G2J1</accession>
<gene>
    <name evidence="1" type="primary">lexA</name>
    <name type="ordered locus">Acry_2883</name>
</gene>
<name>LEXA_ACICJ</name>
<comment type="function">
    <text evidence="1">Represses a number of genes involved in the response to DNA damage (SOS response), including recA and lexA. In the presence of single-stranded DNA, RecA interacts with LexA causing an autocatalytic cleavage which disrupts the DNA-binding part of LexA, leading to derepression of the SOS regulon and eventually DNA repair.</text>
</comment>
<comment type="catalytic activity">
    <reaction evidence="1">
        <text>Hydrolysis of Ala-|-Gly bond in repressor LexA.</text>
        <dbReference type="EC" id="3.4.21.88"/>
    </reaction>
</comment>
<comment type="subunit">
    <text evidence="1">Homodimer.</text>
</comment>
<comment type="similarity">
    <text evidence="1">Belongs to the peptidase S24 family.</text>
</comment>
<protein>
    <recommendedName>
        <fullName evidence="1">LexA repressor</fullName>
        <ecNumber evidence="1">3.4.21.88</ecNumber>
    </recommendedName>
</protein>
<organism>
    <name type="scientific">Acidiphilium cryptum (strain JF-5)</name>
    <dbReference type="NCBI Taxonomy" id="349163"/>
    <lineage>
        <taxon>Bacteria</taxon>
        <taxon>Pseudomonadati</taxon>
        <taxon>Pseudomonadota</taxon>
        <taxon>Alphaproteobacteria</taxon>
        <taxon>Acetobacterales</taxon>
        <taxon>Acidocellaceae</taxon>
        <taxon>Acidiphilium</taxon>
    </lineage>
</organism>
<keyword id="KW-0068">Autocatalytic cleavage</keyword>
<keyword id="KW-0227">DNA damage</keyword>
<keyword id="KW-0234">DNA repair</keyword>
<keyword id="KW-0235">DNA replication</keyword>
<keyword id="KW-0238">DNA-binding</keyword>
<keyword id="KW-0378">Hydrolase</keyword>
<keyword id="KW-1185">Reference proteome</keyword>
<keyword id="KW-0678">Repressor</keyword>
<keyword id="KW-0742">SOS response</keyword>
<keyword id="KW-0804">Transcription</keyword>
<keyword id="KW-0805">Transcription regulation</keyword>